<proteinExistence type="evidence at protein level"/>
<feature type="chain" id="PRO_0000449184" description="Short chain dehydrogenase prhI">
    <location>
        <begin position="1"/>
        <end position="257"/>
    </location>
</feature>
<feature type="transmembrane region" description="Helical" evidence="4">
    <location>
        <begin position="7"/>
        <end position="29"/>
    </location>
</feature>
<feature type="active site" description="Proton acceptor" evidence="6">
    <location>
        <position position="151"/>
    </location>
</feature>
<feature type="active site" description="Lowers pKa of active site Tyr" evidence="2">
    <location>
        <position position="155"/>
    </location>
</feature>
<feature type="binding site" evidence="1">
    <location>
        <position position="11"/>
    </location>
    <ligand>
        <name>NADP(+)</name>
        <dbReference type="ChEBI" id="CHEBI:58349"/>
    </ligand>
</feature>
<feature type="binding site" evidence="1">
    <location>
        <position position="57"/>
    </location>
    <ligand>
        <name>NADP(+)</name>
        <dbReference type="ChEBI" id="CHEBI:58349"/>
    </ligand>
</feature>
<feature type="binding site" evidence="1">
    <location>
        <position position="119"/>
    </location>
    <ligand>
        <name>NADP(+)</name>
        <dbReference type="ChEBI" id="CHEBI:58349"/>
    </ligand>
</feature>
<feature type="binding site" evidence="2">
    <location>
        <position position="151"/>
    </location>
    <ligand>
        <name>NADP(+)</name>
        <dbReference type="ChEBI" id="CHEBI:58349"/>
    </ligand>
</feature>
<feature type="binding site" evidence="2">
    <location>
        <position position="155"/>
    </location>
    <ligand>
        <name>NADP(+)</name>
        <dbReference type="ChEBI" id="CHEBI:58349"/>
    </ligand>
</feature>
<feature type="binding site" evidence="2">
    <location>
        <position position="184"/>
    </location>
    <ligand>
        <name>NADP(+)</name>
        <dbReference type="ChEBI" id="CHEBI:58349"/>
    </ligand>
</feature>
<feature type="glycosylation site" description="N-linked (GlcNAc...) asparagine" evidence="5">
    <location>
        <position position="50"/>
    </location>
</feature>
<feature type="glycosylation site" description="N-linked (GlcNAc...) asparagine" evidence="5">
    <location>
        <position position="92"/>
    </location>
</feature>
<feature type="glycosylation site" description="N-linked (GlcNAc...) asparagine" evidence="5">
    <location>
        <position position="110"/>
    </location>
</feature>
<protein>
    <recommendedName>
        <fullName evidence="9">Short chain dehydrogenase prhI</fullName>
        <ecNumber evidence="7">1.1.1.-</ecNumber>
    </recommendedName>
    <alternativeName>
        <fullName evidence="9">Paraherquonin biosynthesis cluster protein I</fullName>
    </alternativeName>
</protein>
<gene>
    <name evidence="9" type="primary">prhI</name>
</gene>
<dbReference type="EC" id="1.1.1.-" evidence="7"/>
<dbReference type="EMBL" id="LC127182">
    <property type="protein sequence ID" value="BAV69310.1"/>
    <property type="molecule type" value="Genomic_DNA"/>
</dbReference>
<dbReference type="SMR" id="A0A1E1FFP5"/>
<dbReference type="GlyCosmos" id="A0A1E1FFP5">
    <property type="glycosylation" value="3 sites, No reported glycans"/>
</dbReference>
<dbReference type="UniPathway" id="UPA00213"/>
<dbReference type="GO" id="GO:0016020">
    <property type="term" value="C:membrane"/>
    <property type="evidence" value="ECO:0007669"/>
    <property type="project" value="UniProtKB-SubCell"/>
</dbReference>
<dbReference type="GO" id="GO:0016491">
    <property type="term" value="F:oxidoreductase activity"/>
    <property type="evidence" value="ECO:0000314"/>
    <property type="project" value="GO_Central"/>
</dbReference>
<dbReference type="GO" id="GO:0140874">
    <property type="term" value="P:paraherquonin biosynthetic process"/>
    <property type="evidence" value="ECO:0000314"/>
    <property type="project" value="GO_Central"/>
</dbReference>
<dbReference type="CDD" id="cd05233">
    <property type="entry name" value="SDR_c"/>
    <property type="match status" value="1"/>
</dbReference>
<dbReference type="FunFam" id="3.40.50.720:FF:000084">
    <property type="entry name" value="Short-chain dehydrogenase reductase"/>
    <property type="match status" value="1"/>
</dbReference>
<dbReference type="Gene3D" id="3.40.50.720">
    <property type="entry name" value="NAD(P)-binding Rossmann-like Domain"/>
    <property type="match status" value="1"/>
</dbReference>
<dbReference type="InterPro" id="IPR036291">
    <property type="entry name" value="NAD(P)-bd_dom_sf"/>
</dbReference>
<dbReference type="InterPro" id="IPR002347">
    <property type="entry name" value="SDR_fam"/>
</dbReference>
<dbReference type="InterPro" id="IPR051122">
    <property type="entry name" value="SDR_superfamily_enzyme"/>
</dbReference>
<dbReference type="PANTHER" id="PTHR43477">
    <property type="entry name" value="DIHYDROANTICAPSIN 7-DEHYDROGENASE"/>
    <property type="match status" value="1"/>
</dbReference>
<dbReference type="PANTHER" id="PTHR43477:SF1">
    <property type="entry name" value="DIHYDROANTICAPSIN 7-DEHYDROGENASE"/>
    <property type="match status" value="1"/>
</dbReference>
<dbReference type="Pfam" id="PF00106">
    <property type="entry name" value="adh_short"/>
    <property type="match status" value="1"/>
</dbReference>
<dbReference type="PRINTS" id="PR00081">
    <property type="entry name" value="GDHRDH"/>
</dbReference>
<dbReference type="PRINTS" id="PR00080">
    <property type="entry name" value="SDRFAMILY"/>
</dbReference>
<dbReference type="SUPFAM" id="SSF51735">
    <property type="entry name" value="NAD(P)-binding Rossmann-fold domains"/>
    <property type="match status" value="1"/>
</dbReference>
<comment type="function">
    <text evidence="3 7 8 11 12 13">Short chain dehydrogenase; part of the gene cluster that mediates the biosynthesis of paraherquonin, a meroterpenoid with a unique, highly congested hexacyclic molecular architecture (PubMed:27602587). The first step of the pathway is the synthesis of 3,5-dimethylorsellinic acid (DMOA) by the polyketide synthase prhL (By similarity). Synthesis of DMOA is followed by farnesylation by the prenyltransferase prhE, methylesterification by the methyl-transferase prhM, epoxidation of the prenyl chain by the flavin-dependent monooxygenase prhF, and cyclization of the farnesyl moiety by the terpene cyclase prhH, to yield the tetracyclic intermediate, protoaustinoid A (By similarity). The short chain dehydrogenase prhI then oxidizes the C-3 alcohol group of the terpene cyclase product to transform protoaustinoid A into protoaustinoid B (PubMed:27602587). The FAD-binding monooxygenase prhJ catalyzes the oxidation of protoaustinoid B into preaustinoid A which is further oxidized into preaustinoid A1 by FAD-binding monooxygenase phrK (PubMed:27602587). Finally, prhA leads to berkeleydione via the berkeleyone B intermediate (PubMed:27602587, PubMed:29317628). PrhA is a multifunctional dioxygenase that first desaturates at C5-C6 to form berkeleyone B, followed by rearrangement of the A/B-ring to form the cycloheptadiene moiety in berkeleydione (PubMed:27602587, PubMed:29317628). Berkeleydione serves as the key intermediate for the biosynthesis of paraherquonin as well as many other meroterpenoids (Probable). The cytochrome P450 monooxygenases prhB, prhD, and prhN, as well as the isomerase prhC, are probably involved in the late stage of paraherquonin biosynthesis, after the production of berkeleydione (Probable). Especially prhC might be a multifunctional enzyme that catalyzes the D-ring expansion via intramolecular methoxy rearrangement, as well as the hydrolysis of the expanded D-ring (Probable).</text>
</comment>
<comment type="catalytic activity">
    <reaction evidence="7">
        <text>protoaustinoid A + A = protoaustinoid B + AH2</text>
        <dbReference type="Rhea" id="RHEA:65176"/>
        <dbReference type="ChEBI" id="CHEBI:13193"/>
        <dbReference type="ChEBI" id="CHEBI:17499"/>
        <dbReference type="ChEBI" id="CHEBI:156350"/>
        <dbReference type="ChEBI" id="CHEBI:156380"/>
    </reaction>
    <physiologicalReaction direction="left-to-right" evidence="7">
        <dbReference type="Rhea" id="RHEA:65177"/>
    </physiologicalReaction>
</comment>
<comment type="pathway">
    <text evidence="7">Secondary metabolite biosynthesis; terpenoid biosynthesis.</text>
</comment>
<comment type="subcellular location">
    <subcellularLocation>
        <location evidence="4">Membrane</location>
        <topology evidence="4">Single-pass membrane protein</topology>
    </subcellularLocation>
</comment>
<comment type="similarity">
    <text evidence="10">Belongs to the short-chain dehydrogenases/reductases (SDR) family.</text>
</comment>
<name>PRHI_PENBI</name>
<reference key="1">
    <citation type="journal article" date="2016" name="J. Am. Chem. Soc.">
        <title>Discovery of key dioxygenases that diverged the paraherquonin and acetoxydehydroaustin pathways in Penicillium brasilianum.</title>
        <authorList>
            <person name="Matsuda Y."/>
            <person name="Iwabuchi T."/>
            <person name="Fujimoto T."/>
            <person name="Awakawa T."/>
            <person name="Nakashima Y."/>
            <person name="Mori T."/>
            <person name="Zhang H."/>
            <person name="Hayashi F."/>
            <person name="Abe I."/>
        </authorList>
    </citation>
    <scope>NUCLEOTIDE SEQUENCE [GENOMIC DNA]</scope>
    <scope>FUNCTION</scope>
    <scope>CATALYTIC ACTIVITY</scope>
    <scope>PATHWAY</scope>
    <source>
        <strain>ATCC 22354 / NBRC 6234 / CBS 338.59 / FRR 3454 / IMI 68220</strain>
    </source>
</reference>
<reference key="2">
    <citation type="journal article" date="2017" name="Nat. Chem. Biol.">
        <title>Molecular basis for the unusual ring reconstruction in fungal meroterpenoid biogenesis.</title>
        <authorList>
            <person name="Mori T."/>
            <person name="Iwabuchi T."/>
            <person name="Hoshino S."/>
            <person name="Wang H."/>
            <person name="Matsuda Y."/>
            <person name="Abe I."/>
        </authorList>
    </citation>
    <scope>FUNCTION</scope>
</reference>
<reference key="3">
    <citation type="journal article" date="2018" name="Nat. Commun.">
        <title>Structure function and engineering of multifunctional non-heme iron dependent oxygenases in fungal meroterpenoid biosynthesis.</title>
        <authorList>
            <person name="Nakashima Y."/>
            <person name="Mori T."/>
            <person name="Nakamura H."/>
            <person name="Awakawa T."/>
            <person name="Hoshino S."/>
            <person name="Senda M."/>
            <person name="Senda T."/>
            <person name="Abe I."/>
        </authorList>
    </citation>
    <scope>FUNCTION</scope>
</reference>
<organism>
    <name type="scientific">Penicillium brasilianum</name>
    <dbReference type="NCBI Taxonomy" id="104259"/>
    <lineage>
        <taxon>Eukaryota</taxon>
        <taxon>Fungi</taxon>
        <taxon>Dikarya</taxon>
        <taxon>Ascomycota</taxon>
        <taxon>Pezizomycotina</taxon>
        <taxon>Eurotiomycetes</taxon>
        <taxon>Eurotiomycetidae</taxon>
        <taxon>Eurotiales</taxon>
        <taxon>Aspergillaceae</taxon>
        <taxon>Penicillium</taxon>
    </lineage>
</organism>
<accession>A0A1E1FFP5</accession>
<evidence type="ECO:0000250" key="1">
    <source>
        <dbReference type="UniProtKB" id="L0E2Z4"/>
    </source>
</evidence>
<evidence type="ECO:0000250" key="2">
    <source>
        <dbReference type="UniProtKB" id="O93868"/>
    </source>
</evidence>
<evidence type="ECO:0000250" key="3">
    <source>
        <dbReference type="UniProtKB" id="Q5ATJ7"/>
    </source>
</evidence>
<evidence type="ECO:0000255" key="4"/>
<evidence type="ECO:0000255" key="5">
    <source>
        <dbReference type="PROSITE-ProRule" id="PRU00498"/>
    </source>
</evidence>
<evidence type="ECO:0000255" key="6">
    <source>
        <dbReference type="PROSITE-ProRule" id="PRU10001"/>
    </source>
</evidence>
<evidence type="ECO:0000269" key="7">
    <source>
    </source>
</evidence>
<evidence type="ECO:0000269" key="8">
    <source>
    </source>
</evidence>
<evidence type="ECO:0000303" key="9">
    <source>
    </source>
</evidence>
<evidence type="ECO:0000305" key="10"/>
<evidence type="ECO:0000305" key="11">
    <source>
    </source>
</evidence>
<evidence type="ECO:0000305" key="12">
    <source>
    </source>
</evidence>
<evidence type="ECO:0000305" key="13">
    <source>
    </source>
</evidence>
<keyword id="KW-0325">Glycoprotein</keyword>
<keyword id="KW-0472">Membrane</keyword>
<keyword id="KW-0521">NADP</keyword>
<keyword id="KW-0560">Oxidoreductase</keyword>
<keyword id="KW-0812">Transmembrane</keyword>
<keyword id="KW-1133">Transmembrane helix</keyword>
<sequence>MYNIQDHVVIITGSSSGIGLAASTLALASGAKVFGIDISNSPTSVTANPNYTFFAADLSHPESAKKAIAACIAAYGNRIDGLLNIAGVMDLNQSADTVTDDMWDRCIAINLTAPVKLMREVIPIMRLRGKGSIVNVGSKASMSGAVSGIAYTASKHGLVGATKNVAWRFKHEGIRCNIVCPGGVAATGIRDGVDSTQFDSEALEMMSVIHQAHASDHAKGLGLQPEDLAHSLLYFLSDLSKGISGAVIPVDNAWSTI</sequence>